<organism>
    <name type="scientific">Thermococcus kodakarensis (strain ATCC BAA-918 / JCM 12380 / KOD1)</name>
    <name type="common">Pyrococcus kodakaraensis (strain KOD1)</name>
    <dbReference type="NCBI Taxonomy" id="69014"/>
    <lineage>
        <taxon>Archaea</taxon>
        <taxon>Methanobacteriati</taxon>
        <taxon>Methanobacteriota</taxon>
        <taxon>Thermococci</taxon>
        <taxon>Thermococcales</taxon>
        <taxon>Thermococcaceae</taxon>
        <taxon>Thermococcus</taxon>
    </lineage>
</organism>
<protein>
    <recommendedName>
        <fullName evidence="1">Protease HtpX homolog</fullName>
        <ecNumber evidence="1">3.4.24.-</ecNumber>
    </recommendedName>
</protein>
<name>HTPX_THEKO</name>
<gene>
    <name evidence="1" type="primary">htpX</name>
    <name type="ordered locus">TK0677</name>
</gene>
<comment type="cofactor">
    <cofactor evidence="1">
        <name>Zn(2+)</name>
        <dbReference type="ChEBI" id="CHEBI:29105"/>
    </cofactor>
    <text evidence="1">Binds 1 zinc ion per subunit.</text>
</comment>
<comment type="subcellular location">
    <subcellularLocation>
        <location evidence="1">Cell membrane</location>
        <topology evidence="1">Multi-pass membrane protein</topology>
    </subcellularLocation>
</comment>
<comment type="similarity">
    <text evidence="1">Belongs to the peptidase M48B family.</text>
</comment>
<reference key="1">
    <citation type="journal article" date="2005" name="Genome Res.">
        <title>Complete genome sequence of the hyperthermophilic archaeon Thermococcus kodakaraensis KOD1 and comparison with Pyrococcus genomes.</title>
        <authorList>
            <person name="Fukui T."/>
            <person name="Atomi H."/>
            <person name="Kanai T."/>
            <person name="Matsumi R."/>
            <person name="Fujiwara S."/>
            <person name="Imanaka T."/>
        </authorList>
    </citation>
    <scope>NUCLEOTIDE SEQUENCE [LARGE SCALE GENOMIC DNA]</scope>
    <source>
        <strain>ATCC BAA-918 / JCM 12380 / KOD1</strain>
    </source>
</reference>
<keyword id="KW-1003">Cell membrane</keyword>
<keyword id="KW-0378">Hydrolase</keyword>
<keyword id="KW-0472">Membrane</keyword>
<keyword id="KW-0479">Metal-binding</keyword>
<keyword id="KW-0482">Metalloprotease</keyword>
<keyword id="KW-0645">Protease</keyword>
<keyword id="KW-1185">Reference proteome</keyword>
<keyword id="KW-0812">Transmembrane</keyword>
<keyword id="KW-1133">Transmembrane helix</keyword>
<keyword id="KW-0862">Zinc</keyword>
<dbReference type="EC" id="3.4.24.-" evidence="1"/>
<dbReference type="EMBL" id="AP006878">
    <property type="protein sequence ID" value="BAD84866.1"/>
    <property type="molecule type" value="Genomic_DNA"/>
</dbReference>
<dbReference type="RefSeq" id="WP_011249628.1">
    <property type="nucleotide sequence ID" value="NC_006624.1"/>
</dbReference>
<dbReference type="FunCoup" id="Q5JEZ8">
    <property type="interactions" value="2"/>
</dbReference>
<dbReference type="STRING" id="69014.TK0677"/>
<dbReference type="EnsemblBacteria" id="BAD84866">
    <property type="protein sequence ID" value="BAD84866"/>
    <property type="gene ID" value="TK0677"/>
</dbReference>
<dbReference type="GeneID" id="78447191"/>
<dbReference type="KEGG" id="tko:TK0677"/>
<dbReference type="PATRIC" id="fig|69014.16.peg.658"/>
<dbReference type="eggNOG" id="arCOG01331">
    <property type="taxonomic scope" value="Archaea"/>
</dbReference>
<dbReference type="HOGENOM" id="CLU_042266_3_0_2"/>
<dbReference type="InParanoid" id="Q5JEZ8"/>
<dbReference type="OrthoDB" id="28389at2157"/>
<dbReference type="PhylomeDB" id="Q5JEZ8"/>
<dbReference type="Proteomes" id="UP000000536">
    <property type="component" value="Chromosome"/>
</dbReference>
<dbReference type="GO" id="GO:0005886">
    <property type="term" value="C:plasma membrane"/>
    <property type="evidence" value="ECO:0007669"/>
    <property type="project" value="UniProtKB-SubCell"/>
</dbReference>
<dbReference type="GO" id="GO:0004222">
    <property type="term" value="F:metalloendopeptidase activity"/>
    <property type="evidence" value="ECO:0007669"/>
    <property type="project" value="UniProtKB-UniRule"/>
</dbReference>
<dbReference type="GO" id="GO:0008270">
    <property type="term" value="F:zinc ion binding"/>
    <property type="evidence" value="ECO:0007669"/>
    <property type="project" value="UniProtKB-UniRule"/>
</dbReference>
<dbReference type="GO" id="GO:0006508">
    <property type="term" value="P:proteolysis"/>
    <property type="evidence" value="ECO:0007669"/>
    <property type="project" value="UniProtKB-KW"/>
</dbReference>
<dbReference type="CDD" id="cd07336">
    <property type="entry name" value="M48B_HtpX_like"/>
    <property type="match status" value="1"/>
</dbReference>
<dbReference type="Gene3D" id="3.30.2010.10">
    <property type="entry name" value="Metalloproteases ('zincins'), catalytic domain"/>
    <property type="match status" value="1"/>
</dbReference>
<dbReference type="HAMAP" id="MF_00188">
    <property type="entry name" value="Pept_M48_protease_HtpX"/>
    <property type="match status" value="1"/>
</dbReference>
<dbReference type="InterPro" id="IPR050083">
    <property type="entry name" value="HtpX_protease"/>
</dbReference>
<dbReference type="InterPro" id="IPR022919">
    <property type="entry name" value="Pept_M48_protease_HtpX"/>
</dbReference>
<dbReference type="InterPro" id="IPR001915">
    <property type="entry name" value="Peptidase_M48"/>
</dbReference>
<dbReference type="PANTHER" id="PTHR43221">
    <property type="entry name" value="PROTEASE HTPX"/>
    <property type="match status" value="1"/>
</dbReference>
<dbReference type="PANTHER" id="PTHR43221:SF2">
    <property type="entry name" value="PROTEASE HTPX HOMOLOG"/>
    <property type="match status" value="1"/>
</dbReference>
<dbReference type="Pfam" id="PF01435">
    <property type="entry name" value="Peptidase_M48"/>
    <property type="match status" value="1"/>
</dbReference>
<feature type="chain" id="PRO_0000138927" description="Protease HtpX homolog">
    <location>
        <begin position="1"/>
        <end position="290"/>
    </location>
</feature>
<feature type="transmembrane region" description="Helical" evidence="1">
    <location>
        <begin position="5"/>
        <end position="27"/>
    </location>
</feature>
<feature type="transmembrane region" description="Helical" evidence="1">
    <location>
        <begin position="32"/>
        <end position="51"/>
    </location>
</feature>
<feature type="transmembrane region" description="Helical" evidence="1">
    <location>
        <begin position="143"/>
        <end position="163"/>
    </location>
</feature>
<feature type="transmembrane region" description="Helical" evidence="1">
    <location>
        <begin position="182"/>
        <end position="202"/>
    </location>
</feature>
<feature type="active site" evidence="1">
    <location>
        <position position="134"/>
    </location>
</feature>
<feature type="binding site" evidence="1">
    <location>
        <position position="133"/>
    </location>
    <ligand>
        <name>Zn(2+)</name>
        <dbReference type="ChEBI" id="CHEBI:29105"/>
        <note>catalytic</note>
    </ligand>
</feature>
<feature type="binding site" evidence="1">
    <location>
        <position position="137"/>
    </location>
    <ligand>
        <name>Zn(2+)</name>
        <dbReference type="ChEBI" id="CHEBI:29105"/>
        <note>catalytic</note>
    </ligand>
</feature>
<feature type="binding site" evidence="1">
    <location>
        <position position="208"/>
    </location>
    <ligand>
        <name>Zn(2+)</name>
        <dbReference type="ChEBI" id="CHEBI:29105"/>
        <note>catalytic</note>
    </ligand>
</feature>
<sequence>MGLVMWLRTGVLMAILTGLLMGIGYLFGGPNVAFIMFLFSMFFNFITYWYSDRIVLSWYNARIVDEYEAPELYAIVRDLAQRAGLPTPRVAIIPSETPNAFATGRDPKHAVVAVTQGLLRILNRDELEGVIGHELTHIKNRDILIGTVAAAMAGAIMQLAYWARWIAIFGGFNRDRDDGGDIIGAILVAILAPIAAMLIQAAISRSREFLADEGGARISGKPHALASALMKIEQAVNYRPMREGNPATAHMFIVNPFRGMSIANLFSTHPPTEARIERLRKIAEEMGIYF</sequence>
<proteinExistence type="inferred from homology"/>
<evidence type="ECO:0000255" key="1">
    <source>
        <dbReference type="HAMAP-Rule" id="MF_00188"/>
    </source>
</evidence>
<accession>Q5JEZ8</accession>